<name>Y1680_ENTFA</name>
<feature type="chain" id="PRO_0000164271" description="UPF0346 protein EF_1680">
    <location>
        <begin position="1"/>
        <end position="72"/>
    </location>
</feature>
<evidence type="ECO:0000255" key="1">
    <source>
        <dbReference type="HAMAP-Rule" id="MF_01538"/>
    </source>
</evidence>
<comment type="similarity">
    <text evidence="1">Belongs to the UPF0346 family.</text>
</comment>
<reference key="1">
    <citation type="journal article" date="2003" name="Science">
        <title>Role of mobile DNA in the evolution of vancomycin-resistant Enterococcus faecalis.</title>
        <authorList>
            <person name="Paulsen I.T."/>
            <person name="Banerjei L."/>
            <person name="Myers G.S.A."/>
            <person name="Nelson K.E."/>
            <person name="Seshadri R."/>
            <person name="Read T.D."/>
            <person name="Fouts D.E."/>
            <person name="Eisen J.A."/>
            <person name="Gill S.R."/>
            <person name="Heidelberg J.F."/>
            <person name="Tettelin H."/>
            <person name="Dodson R.J."/>
            <person name="Umayam L.A."/>
            <person name="Brinkac L.M."/>
            <person name="Beanan M.J."/>
            <person name="Daugherty S.C."/>
            <person name="DeBoy R.T."/>
            <person name="Durkin S.A."/>
            <person name="Kolonay J.F."/>
            <person name="Madupu R."/>
            <person name="Nelson W.C."/>
            <person name="Vamathevan J.J."/>
            <person name="Tran B."/>
            <person name="Upton J."/>
            <person name="Hansen T."/>
            <person name="Shetty J."/>
            <person name="Khouri H.M."/>
            <person name="Utterback T.R."/>
            <person name="Radune D."/>
            <person name="Ketchum K.A."/>
            <person name="Dougherty B.A."/>
            <person name="Fraser C.M."/>
        </authorList>
    </citation>
    <scope>NUCLEOTIDE SEQUENCE [LARGE SCALE GENOMIC DNA]</scope>
    <source>
        <strain>ATCC 700802 / V583</strain>
    </source>
</reference>
<gene>
    <name type="ordered locus">EF_1680</name>
</gene>
<keyword id="KW-1185">Reference proteome</keyword>
<protein>
    <recommendedName>
        <fullName evidence="1">UPF0346 protein EF_1680</fullName>
    </recommendedName>
</protein>
<dbReference type="EMBL" id="AE016830">
    <property type="protein sequence ID" value="AAO81458.1"/>
    <property type="molecule type" value="Genomic_DNA"/>
</dbReference>
<dbReference type="RefSeq" id="NP_815388.1">
    <property type="nucleotide sequence ID" value="NC_004668.1"/>
</dbReference>
<dbReference type="RefSeq" id="WP_002364020.1">
    <property type="nucleotide sequence ID" value="NZ_KE136528.1"/>
</dbReference>
<dbReference type="SMR" id="Q834H2"/>
<dbReference type="STRING" id="226185.EF_1680"/>
<dbReference type="EnsemblBacteria" id="AAO81458">
    <property type="protein sequence ID" value="AAO81458"/>
    <property type="gene ID" value="EF_1680"/>
</dbReference>
<dbReference type="KEGG" id="efa:EF1680"/>
<dbReference type="PATRIC" id="fig|226185.45.peg.1830"/>
<dbReference type="eggNOG" id="COG4479">
    <property type="taxonomic scope" value="Bacteria"/>
</dbReference>
<dbReference type="HOGENOM" id="CLU_177534_1_0_9"/>
<dbReference type="Proteomes" id="UP000001415">
    <property type="component" value="Chromosome"/>
</dbReference>
<dbReference type="Gene3D" id="1.10.150.260">
    <property type="entry name" value="YozE SAM-like"/>
    <property type="match status" value="1"/>
</dbReference>
<dbReference type="HAMAP" id="MF_01538">
    <property type="entry name" value="UPF0346"/>
    <property type="match status" value="1"/>
</dbReference>
<dbReference type="InterPro" id="IPR010673">
    <property type="entry name" value="UPF0346"/>
</dbReference>
<dbReference type="InterPro" id="IPR023089">
    <property type="entry name" value="YozE_SAM-like"/>
</dbReference>
<dbReference type="InterPro" id="IPR036806">
    <property type="entry name" value="YozE_SAM-like_sf"/>
</dbReference>
<dbReference type="NCBIfam" id="NF010193">
    <property type="entry name" value="PRK13672.1"/>
    <property type="match status" value="1"/>
</dbReference>
<dbReference type="Pfam" id="PF06855">
    <property type="entry name" value="YozE_SAM_like"/>
    <property type="match status" value="1"/>
</dbReference>
<dbReference type="PIRSF" id="PIRSF037262">
    <property type="entry name" value="UCP037262"/>
    <property type="match status" value="1"/>
</dbReference>
<dbReference type="SUPFAM" id="SSF140652">
    <property type="entry name" value="YozE-like"/>
    <property type="match status" value="1"/>
</dbReference>
<sequence>MRRSFYHYLMTLKGPAKDSETDFANEAAKDIQFPKQTEDYHELSSYLEMNADYLSNMDIFDELWEKYLENNK</sequence>
<proteinExistence type="inferred from homology"/>
<organism>
    <name type="scientific">Enterococcus faecalis (strain ATCC 700802 / V583)</name>
    <dbReference type="NCBI Taxonomy" id="226185"/>
    <lineage>
        <taxon>Bacteria</taxon>
        <taxon>Bacillati</taxon>
        <taxon>Bacillota</taxon>
        <taxon>Bacilli</taxon>
        <taxon>Lactobacillales</taxon>
        <taxon>Enterococcaceae</taxon>
        <taxon>Enterococcus</taxon>
    </lineage>
</organism>
<accession>Q834H2</accession>